<dbReference type="EMBL" id="M19790">
    <property type="protein sequence ID" value="AAA43775.1"/>
    <property type="molecule type" value="Genomic_RNA"/>
</dbReference>
<dbReference type="SMR" id="P12600"/>
<dbReference type="Proteomes" id="UP000137758">
    <property type="component" value="Genome"/>
</dbReference>
<dbReference type="GO" id="GO:0030430">
    <property type="term" value="C:host cell cytoplasm"/>
    <property type="evidence" value="ECO:0007669"/>
    <property type="project" value="UniProtKB-SubCell"/>
</dbReference>
<dbReference type="GO" id="GO:0042025">
    <property type="term" value="C:host cell nucleus"/>
    <property type="evidence" value="ECO:0007669"/>
    <property type="project" value="UniProtKB-SubCell"/>
</dbReference>
<dbReference type="GO" id="GO:0030291">
    <property type="term" value="F:protein serine/threonine kinase inhibitor activity"/>
    <property type="evidence" value="ECO:0007669"/>
    <property type="project" value="UniProtKB-KW"/>
</dbReference>
<dbReference type="GO" id="GO:0003723">
    <property type="term" value="F:RNA binding"/>
    <property type="evidence" value="ECO:0007669"/>
    <property type="project" value="UniProtKB-KW"/>
</dbReference>
<dbReference type="GO" id="GO:0039579">
    <property type="term" value="P:symbiont-mediated suppression of host ISG15-protein conjugation"/>
    <property type="evidence" value="ECO:0007669"/>
    <property type="project" value="UniProtKB-KW"/>
</dbReference>
<dbReference type="GO" id="GO:0039580">
    <property type="term" value="P:symbiont-mediated suppression of host PKR/eIFalpha signaling"/>
    <property type="evidence" value="ECO:0007669"/>
    <property type="project" value="UniProtKB-KW"/>
</dbReference>
<dbReference type="GO" id="GO:0039502">
    <property type="term" value="P:symbiont-mediated suppression of host type I interferon-mediated signaling pathway"/>
    <property type="evidence" value="ECO:0007669"/>
    <property type="project" value="UniProtKB-KW"/>
</dbReference>
<dbReference type="Gene3D" id="1.10.287.10">
    <property type="entry name" value="S15/NS1, RNA-binding"/>
    <property type="match status" value="1"/>
</dbReference>
<dbReference type="HAMAP" id="MF_04066">
    <property type="entry name" value="INFV_NS1"/>
    <property type="match status" value="1"/>
</dbReference>
<dbReference type="InterPro" id="IPR004208">
    <property type="entry name" value="NS1"/>
</dbReference>
<dbReference type="InterPro" id="IPR009068">
    <property type="entry name" value="uS15_NS1_RNA-bd_sf"/>
</dbReference>
<dbReference type="Pfam" id="PF02942">
    <property type="entry name" value="Flu_B_NS1"/>
    <property type="match status" value="1"/>
</dbReference>
<dbReference type="PIRSF" id="PIRSF003938">
    <property type="entry name" value="Flu_B_NS1"/>
    <property type="match status" value="1"/>
</dbReference>
<dbReference type="SUPFAM" id="SSF47060">
    <property type="entry name" value="S15/NS1 RNA-binding domain"/>
    <property type="match status" value="1"/>
</dbReference>
<gene>
    <name evidence="1" type="primary">NS</name>
</gene>
<proteinExistence type="inferred from homology"/>
<comment type="function">
    <text evidence="1">Binds and inhibits the conjugation of the ubiquitin-like G1P2/ISG15 protein to its target proteins. Since G1P2/ISG15 is an early antiviral protein, NS1 may inhibit the host antiviral response. Prevents EIF2AK2/PKR activation, either by binding double strand RNA or by interacting directly with EIF2AK2/PKR. Also binds poly(A) and U6 snRNA.</text>
</comment>
<comment type="subunit">
    <text evidence="1">Homodimer. Interacts with and inhibits human G1P2 conjugation by UBE1L.</text>
</comment>
<comment type="subcellular location">
    <subcellularLocation>
        <location evidence="1">Host cytoplasm</location>
    </subcellularLocation>
    <subcellularLocation>
        <location evidence="1">Host nucleus</location>
    </subcellularLocation>
</comment>
<comment type="alternative products">
    <event type="alternative splicing"/>
    <isoform>
        <id>P12600-1</id>
        <name>NS1</name>
        <sequence type="displayed"/>
    </isoform>
    <isoform>
        <id>P12600-2</id>
        <name>NEP</name>
        <name>NS2</name>
        <sequence type="not described"/>
    </isoform>
</comment>
<comment type="similarity">
    <text evidence="1">Belongs to the influenza B viruses NS1 family.</text>
</comment>
<reference key="1">
    <citation type="journal article" date="1988" name="Virology">
        <title>Influenza B virus evolution: co-circulating lineages and comparison of evolutionary pattern with those of influenza A and C viruses.</title>
        <authorList>
            <person name="Yamashita M."/>
            <person name="Krystal M."/>
            <person name="Fitch W.M."/>
            <person name="Palese P."/>
        </authorList>
    </citation>
    <scope>NUCLEOTIDE SEQUENCE [GENOMIC RNA]</scope>
</reference>
<reference key="2">
    <citation type="journal article" date="2003" name="Virology">
        <title>Intracellular warfare between human influenza viruses and human cells: the roles of the viral NS1 protein.</title>
        <authorList>
            <person name="Krug R.M."/>
            <person name="Yuan W."/>
            <person name="Noah D.L."/>
            <person name="Latham A.G."/>
        </authorList>
    </citation>
    <scope>REVIEW</scope>
</reference>
<feature type="chain" id="PRO_0000078969" description="Non-structural protein 1">
    <location>
        <begin position="1"/>
        <end position="281"/>
    </location>
</feature>
<feature type="region of interest" description="G1P2-binding">
    <location>
        <begin position="1"/>
        <end position="103"/>
    </location>
</feature>
<feature type="region of interest" description="RNA-binding and homodimerization" evidence="1">
    <location>
        <begin position="1"/>
        <end position="93"/>
    </location>
</feature>
<feature type="short sequence motif" description="Nuclear localization signal" evidence="1">
    <location>
        <begin position="50"/>
        <end position="55"/>
    </location>
</feature>
<evidence type="ECO:0000255" key="1">
    <source>
        <dbReference type="HAMAP-Rule" id="MF_04066"/>
    </source>
</evidence>
<name>NS1_INBSI</name>
<organism>
    <name type="scientific">Influenza B virus (strain B/Singapore/222/1979)</name>
    <dbReference type="NCBI Taxonomy" id="107417"/>
    <lineage>
        <taxon>Viruses</taxon>
        <taxon>Riboviria</taxon>
        <taxon>Orthornavirae</taxon>
        <taxon>Negarnaviricota</taxon>
        <taxon>Polyploviricotina</taxon>
        <taxon>Insthoviricetes</taxon>
        <taxon>Articulavirales</taxon>
        <taxon>Orthomyxoviridae</taxon>
        <taxon>Betainfluenzavirus</taxon>
        <taxon>Betainfluenzavirus influenzae</taxon>
        <taxon>Influenza B virus</taxon>
    </lineage>
</organism>
<protein>
    <recommendedName>
        <fullName evidence="1">Non-structural protein 1</fullName>
        <shortName evidence="1">NS1</shortName>
    </recommendedName>
    <alternativeName>
        <fullName evidence="1">NS1A</fullName>
    </alternativeName>
</protein>
<organismHost>
    <name type="scientific">Homo sapiens</name>
    <name type="common">Human</name>
    <dbReference type="NCBI Taxonomy" id="9606"/>
</organismHost>
<sequence>MAENMTTTQIEVGPGATNATINFEAGILECYERLSWQRALDYPGQDRLNRLKRKLESRIKTHNKSEPESKRMSLEERKAIGVKMMKVLLFMNPSAGIEGFEPYCMKNFSNSNCPNYNWTDYPPTPGKCLDDIEEEPENVDDPTEIVLRDMNNKDARQKIKEEVNTQKEGKFRLTIKRDIRNVLSLRVLVNGKFLKHPNGYKTLSTLHRLNVYDQSGRLVAKLVATDDLTVEDEEDGHRILNSLFERFNEGHSKPIRAAETAVGVLSQFGQEHRLSPEEGDN</sequence>
<keyword id="KW-0025">Alternative splicing</keyword>
<keyword id="KW-1035">Host cytoplasm</keyword>
<keyword id="KW-1048">Host nucleus</keyword>
<keyword id="KW-0945">Host-virus interaction</keyword>
<keyword id="KW-1090">Inhibition of host innate immune response by virus</keyword>
<keyword id="KW-1114">Inhibition of host interferon signaling pathway by virus</keyword>
<keyword id="KW-1095">Inhibition of host ISG15 by virus</keyword>
<keyword id="KW-1102">Inhibition of host PKR by virus</keyword>
<keyword id="KW-0922">Interferon antiviral system evasion</keyword>
<keyword id="KW-0694">RNA-binding</keyword>
<keyword id="KW-0899">Viral immunoevasion</keyword>
<accession>P12600</accession>